<protein>
    <recommendedName>
        <fullName evidence="1">N-alpha-acetyltransferase</fullName>
        <shortName evidence="1">NAT</shortName>
        <ecNumber evidence="1">2.3.1.255</ecNumber>
        <ecNumber evidence="1">2.3.1.258</ecNumber>
    </recommendedName>
    <alternativeName>
        <fullName evidence="1">Amino-terminal acetyltransferase</fullName>
    </alternativeName>
    <alternativeName>
        <fullName evidence="1">N-terminal acetyltransferase</fullName>
    </alternativeName>
</protein>
<gene>
    <name type="ordered locus">STK_02580</name>
</gene>
<evidence type="ECO:0000250" key="1">
    <source>
        <dbReference type="UniProtKB" id="Q980R9"/>
    </source>
</evidence>
<evidence type="ECO:0000255" key="2">
    <source>
        <dbReference type="PROSITE-ProRule" id="PRU00532"/>
    </source>
</evidence>
<dbReference type="EC" id="2.3.1.255" evidence="1"/>
<dbReference type="EC" id="2.3.1.258" evidence="1"/>
<dbReference type="EMBL" id="BA000023">
    <property type="protein sequence ID" value="BAB65224.1"/>
    <property type="molecule type" value="Genomic_DNA"/>
</dbReference>
<dbReference type="SMR" id="Q976C3"/>
<dbReference type="STRING" id="273063.STK_02580"/>
<dbReference type="KEGG" id="sto:STK_02580"/>
<dbReference type="PATRIC" id="fig|273063.9.peg.309"/>
<dbReference type="eggNOG" id="arCOG00833">
    <property type="taxonomic scope" value="Archaea"/>
</dbReference>
<dbReference type="OrthoDB" id="43754at2157"/>
<dbReference type="Proteomes" id="UP000001015">
    <property type="component" value="Chromosome"/>
</dbReference>
<dbReference type="GO" id="GO:0031415">
    <property type="term" value="C:NatA complex"/>
    <property type="evidence" value="ECO:0007669"/>
    <property type="project" value="InterPro"/>
</dbReference>
<dbReference type="GO" id="GO:0046872">
    <property type="term" value="F:metal ion binding"/>
    <property type="evidence" value="ECO:0007669"/>
    <property type="project" value="UniProtKB-KW"/>
</dbReference>
<dbReference type="GO" id="GO:0120518">
    <property type="term" value="F:protein N-terminal-methionine acetyltransferase activity"/>
    <property type="evidence" value="ECO:0007669"/>
    <property type="project" value="UniProtKB-EC"/>
</dbReference>
<dbReference type="GO" id="GO:1990189">
    <property type="term" value="F:protein N-terminal-serine acetyltransferase activity"/>
    <property type="evidence" value="ECO:0007669"/>
    <property type="project" value="RHEA"/>
</dbReference>
<dbReference type="GO" id="GO:0004596">
    <property type="term" value="F:protein-N-terminal amino-acid acetyltransferase activity"/>
    <property type="evidence" value="ECO:0000250"/>
    <property type="project" value="UniProtKB"/>
</dbReference>
<dbReference type="GO" id="GO:0008999">
    <property type="term" value="F:protein-N-terminal-alanine acetyltransferase activity"/>
    <property type="evidence" value="ECO:0007669"/>
    <property type="project" value="RHEA"/>
</dbReference>
<dbReference type="CDD" id="cd04301">
    <property type="entry name" value="NAT_SF"/>
    <property type="match status" value="1"/>
</dbReference>
<dbReference type="FunFam" id="3.40.630.30:FF:000200">
    <property type="entry name" value="N-alpha-acetyltransferase"/>
    <property type="match status" value="1"/>
</dbReference>
<dbReference type="Gene3D" id="3.40.630.30">
    <property type="match status" value="1"/>
</dbReference>
<dbReference type="InterPro" id="IPR006464">
    <property type="entry name" value="AcTrfase_RimI/Ard1"/>
</dbReference>
<dbReference type="InterPro" id="IPR016181">
    <property type="entry name" value="Acyl_CoA_acyltransferase"/>
</dbReference>
<dbReference type="InterPro" id="IPR045047">
    <property type="entry name" value="Ard1-like"/>
</dbReference>
<dbReference type="InterPro" id="IPR000182">
    <property type="entry name" value="GNAT_dom"/>
</dbReference>
<dbReference type="NCBIfam" id="TIGR01575">
    <property type="entry name" value="rimI"/>
    <property type="match status" value="1"/>
</dbReference>
<dbReference type="PANTHER" id="PTHR23091">
    <property type="entry name" value="N-TERMINAL ACETYLTRANSFERASE"/>
    <property type="match status" value="1"/>
</dbReference>
<dbReference type="PANTHER" id="PTHR23091:SF4">
    <property type="entry name" value="N-TERMINAL AMINO-ACID N(ALPHA)-ACETYLTRANSFERASE NATA"/>
    <property type="match status" value="1"/>
</dbReference>
<dbReference type="Pfam" id="PF00583">
    <property type="entry name" value="Acetyltransf_1"/>
    <property type="match status" value="1"/>
</dbReference>
<dbReference type="SUPFAM" id="SSF55729">
    <property type="entry name" value="Acyl-CoA N-acyltransferases (Nat)"/>
    <property type="match status" value="1"/>
</dbReference>
<dbReference type="PROSITE" id="PS51186">
    <property type="entry name" value="GNAT"/>
    <property type="match status" value="1"/>
</dbReference>
<reference key="1">
    <citation type="journal article" date="2001" name="DNA Res.">
        <title>Complete genome sequence of an aerobic thermoacidophilic Crenarchaeon, Sulfolobus tokodaii strain7.</title>
        <authorList>
            <person name="Kawarabayasi Y."/>
            <person name="Hino Y."/>
            <person name="Horikawa H."/>
            <person name="Jin-no K."/>
            <person name="Takahashi M."/>
            <person name="Sekine M."/>
            <person name="Baba S."/>
            <person name="Ankai A."/>
            <person name="Kosugi H."/>
            <person name="Hosoyama A."/>
            <person name="Fukui S."/>
            <person name="Nagai Y."/>
            <person name="Nishijima K."/>
            <person name="Otsuka R."/>
            <person name="Nakazawa H."/>
            <person name="Takamiya M."/>
            <person name="Kato Y."/>
            <person name="Yoshizawa T."/>
            <person name="Tanaka T."/>
            <person name="Kudoh Y."/>
            <person name="Yamazaki J."/>
            <person name="Kushida N."/>
            <person name="Oguchi A."/>
            <person name="Aoki K."/>
            <person name="Masuda S."/>
            <person name="Yanagii M."/>
            <person name="Nishimura M."/>
            <person name="Yamagishi A."/>
            <person name="Oshima T."/>
            <person name="Kikuchi H."/>
        </authorList>
    </citation>
    <scope>NUCLEOTIDE SEQUENCE [LARGE SCALE GENOMIC DNA]</scope>
    <source>
        <strain>DSM 16993 / JCM 10545 / NBRC 100140 / 7</strain>
    </source>
</reference>
<organism>
    <name type="scientific">Sulfurisphaera tokodaii (strain DSM 16993 / JCM 10545 / NBRC 100140 / 7)</name>
    <name type="common">Sulfolobus tokodaii</name>
    <dbReference type="NCBI Taxonomy" id="273063"/>
    <lineage>
        <taxon>Archaea</taxon>
        <taxon>Thermoproteota</taxon>
        <taxon>Thermoprotei</taxon>
        <taxon>Sulfolobales</taxon>
        <taxon>Sulfolobaceae</taxon>
        <taxon>Sulfurisphaera</taxon>
    </lineage>
</organism>
<proteinExistence type="inferred from homology"/>
<sequence length="167" mass="19276">MEFAEAKKGKEYRIRNARLTDVDQIIKINRLALPENYPYYFFVEHLKEYEAAFFVAEVDGEVVGYIMPRIEWGFSNLKQLPTLVKKGHVVSIAVLEQYRRLGIGTALLQASMKAMKEVYNAEEVYLEVRVSNSPAINLYKKLGFKEVKVLRHYYADGEDAYLMAAPL</sequence>
<accession>Q976C3</accession>
<keyword id="KW-0012">Acyltransferase</keyword>
<keyword id="KW-0963">Cytoplasm</keyword>
<keyword id="KW-0479">Metal-binding</keyword>
<keyword id="KW-1185">Reference proteome</keyword>
<keyword id="KW-0808">Transferase</keyword>
<keyword id="KW-0862">Zinc</keyword>
<feature type="chain" id="PRO_0000281645" description="N-alpha-acetyltransferase">
    <location>
        <begin position="1"/>
        <end position="167"/>
    </location>
</feature>
<feature type="domain" description="N-acetyltransferase" evidence="2">
    <location>
        <begin position="12"/>
        <end position="167"/>
    </location>
</feature>
<feature type="binding site" evidence="1">
    <location>
        <position position="37"/>
    </location>
    <ligand>
        <name>substrate</name>
    </ligand>
</feature>
<feature type="binding site" evidence="1">
    <location>
        <position position="88"/>
    </location>
    <ligand>
        <name>Zn(2+)</name>
        <dbReference type="ChEBI" id="CHEBI:29105"/>
    </ligand>
</feature>
<feature type="binding site" evidence="1">
    <location>
        <begin position="92"/>
        <end position="94"/>
    </location>
    <ligand>
        <name>acetyl-CoA</name>
        <dbReference type="ChEBI" id="CHEBI:57288"/>
    </ligand>
</feature>
<feature type="binding site" evidence="1">
    <location>
        <begin position="100"/>
        <end position="105"/>
    </location>
    <ligand>
        <name>acetyl-CoA</name>
        <dbReference type="ChEBI" id="CHEBI:57288"/>
    </ligand>
</feature>
<feature type="binding site" evidence="1">
    <location>
        <position position="127"/>
    </location>
    <ligand>
        <name>Zn(2+)</name>
        <dbReference type="ChEBI" id="CHEBI:29105"/>
    </ligand>
</feature>
<feature type="binding site" evidence="1">
    <location>
        <position position="132"/>
    </location>
    <ligand>
        <name>acetyl-CoA</name>
        <dbReference type="ChEBI" id="CHEBI:57288"/>
    </ligand>
</feature>
<feature type="binding site" evidence="1">
    <location>
        <begin position="139"/>
        <end position="141"/>
    </location>
    <ligand>
        <name>acetyl-CoA</name>
        <dbReference type="ChEBI" id="CHEBI:57288"/>
    </ligand>
</feature>
<feature type="binding site" evidence="1">
    <location>
        <position position="154"/>
    </location>
    <ligand>
        <name>substrate</name>
    </ligand>
</feature>
<feature type="site" description="Plays an important role in substrate specificity" evidence="1">
    <location>
        <position position="35"/>
    </location>
</feature>
<feature type="site" description="Plays an important role in modulating multiple conformations of loop regions and contributes to protein thermostability" evidence="1">
    <location>
        <position position="75"/>
    </location>
</feature>
<feature type="site" description="Plays an important role in modulating multiple conformations of loop regions and contributes to protein thermostability" evidence="1">
    <location>
        <position position="82"/>
    </location>
</feature>
<comment type="function">
    <text evidence="1">Displays alpha (N-terminal) acetyltransferase activity. Catalyzes the covalent attachment of an acetyl moiety from acetyl-CoA to the free alpha-amino group at the N-terminus of a protein.</text>
</comment>
<comment type="catalytic activity">
    <reaction evidence="1">
        <text>N-terminal L-alanyl-[protein] + acetyl-CoA = N-terminal N(alpha)-acetyl-L-alanyl-[protein] + CoA + H(+)</text>
        <dbReference type="Rhea" id="RHEA:50500"/>
        <dbReference type="Rhea" id="RHEA-COMP:12701"/>
        <dbReference type="Rhea" id="RHEA-COMP:12702"/>
        <dbReference type="ChEBI" id="CHEBI:15378"/>
        <dbReference type="ChEBI" id="CHEBI:57287"/>
        <dbReference type="ChEBI" id="CHEBI:57288"/>
        <dbReference type="ChEBI" id="CHEBI:64718"/>
        <dbReference type="ChEBI" id="CHEBI:83683"/>
        <dbReference type="EC" id="2.3.1.255"/>
    </reaction>
</comment>
<comment type="catalytic activity">
    <reaction evidence="1">
        <text>N-terminal L-seryl-[protein] + acetyl-CoA = N-terminal N(alpha)-acetyl-L-seryl-[protein] + CoA + H(+)</text>
        <dbReference type="Rhea" id="RHEA:50504"/>
        <dbReference type="Rhea" id="RHEA-COMP:12703"/>
        <dbReference type="Rhea" id="RHEA-COMP:12704"/>
        <dbReference type="ChEBI" id="CHEBI:15378"/>
        <dbReference type="ChEBI" id="CHEBI:57287"/>
        <dbReference type="ChEBI" id="CHEBI:57288"/>
        <dbReference type="ChEBI" id="CHEBI:64738"/>
        <dbReference type="ChEBI" id="CHEBI:83690"/>
        <dbReference type="EC" id="2.3.1.255"/>
    </reaction>
</comment>
<comment type="catalytic activity">
    <reaction evidence="1">
        <text>N-terminal L-methionyl-L-leucyl-[protein] + acetyl-CoA = N-terminal N(alpha)-acetyl-L-methionyl-L-leucyl-[protein] + CoA + H(+)</text>
        <dbReference type="Rhea" id="RHEA:50520"/>
        <dbReference type="Rhea" id="RHEA-COMP:12711"/>
        <dbReference type="Rhea" id="RHEA-COMP:12712"/>
        <dbReference type="ChEBI" id="CHEBI:15378"/>
        <dbReference type="ChEBI" id="CHEBI:57287"/>
        <dbReference type="ChEBI" id="CHEBI:57288"/>
        <dbReference type="ChEBI" id="CHEBI:133377"/>
        <dbReference type="ChEBI" id="CHEBI:133378"/>
        <dbReference type="EC" id="2.3.1.258"/>
    </reaction>
</comment>
<comment type="catalytic activity">
    <reaction evidence="1">
        <text>N-terminal L-methionyl-L-glutamyl-[protein] + acetyl-CoA = N-terminal N(alpha)-acetyl-L-methionyl-L-glutamyl-[protein] + CoA + H(+)</text>
        <dbReference type="Rhea" id="RHEA:50488"/>
        <dbReference type="Rhea" id="RHEA-COMP:12696"/>
        <dbReference type="Rhea" id="RHEA-COMP:12697"/>
        <dbReference type="ChEBI" id="CHEBI:15378"/>
        <dbReference type="ChEBI" id="CHEBI:57287"/>
        <dbReference type="ChEBI" id="CHEBI:57288"/>
        <dbReference type="ChEBI" id="CHEBI:133359"/>
        <dbReference type="ChEBI" id="CHEBI:133360"/>
    </reaction>
</comment>
<comment type="subunit">
    <text evidence="1">Homodimer.</text>
</comment>
<comment type="subcellular location">
    <subcellularLocation>
        <location evidence="1">Cytoplasm</location>
    </subcellularLocation>
</comment>
<comment type="miscellaneous">
    <text evidence="1">NAT does not require a binding partner for activity.</text>
</comment>
<comment type="similarity">
    <text evidence="1">Belongs to the acetyltransferase family. ARD1 subfamily.</text>
</comment>
<name>NAT_SULTO</name>